<reference key="1">
    <citation type="submission" date="2008-02" db="EMBL/GenBank/DDBJ databases">
        <title>Complete sequence of Synechococcus sp. PCC 7002.</title>
        <authorList>
            <person name="Li T."/>
            <person name="Zhao J."/>
            <person name="Zhao C."/>
            <person name="Liu Z."/>
            <person name="Zhao F."/>
            <person name="Marquardt J."/>
            <person name="Nomura C.T."/>
            <person name="Persson S."/>
            <person name="Detter J.C."/>
            <person name="Richardson P.M."/>
            <person name="Lanz C."/>
            <person name="Schuster S.C."/>
            <person name="Wang J."/>
            <person name="Li S."/>
            <person name="Huang X."/>
            <person name="Cai T."/>
            <person name="Yu Z."/>
            <person name="Luo J."/>
            <person name="Zhao J."/>
            <person name="Bryant D.A."/>
        </authorList>
    </citation>
    <scope>NUCLEOTIDE SEQUENCE [LARGE SCALE GENOMIC DNA]</scope>
    <source>
        <strain>ATCC 27264 / PCC 7002 / PR-6</strain>
    </source>
</reference>
<keyword id="KW-0028">Amino-acid biosynthesis</keyword>
<keyword id="KW-0100">Branched-chain amino acid biosynthesis</keyword>
<keyword id="KW-0460">Magnesium</keyword>
<keyword id="KW-0479">Metal-binding</keyword>
<keyword id="KW-0521">NADP</keyword>
<keyword id="KW-0560">Oxidoreductase</keyword>
<keyword id="KW-1185">Reference proteome</keyword>
<evidence type="ECO:0000255" key="1">
    <source>
        <dbReference type="HAMAP-Rule" id="MF_00435"/>
    </source>
</evidence>
<evidence type="ECO:0000255" key="2">
    <source>
        <dbReference type="PROSITE-ProRule" id="PRU01197"/>
    </source>
</evidence>
<evidence type="ECO:0000255" key="3">
    <source>
        <dbReference type="PROSITE-ProRule" id="PRU01198"/>
    </source>
</evidence>
<comment type="function">
    <text evidence="1">Involved in the biosynthesis of branched-chain amino acids (BCAA). Catalyzes an alkyl-migration followed by a ketol-acid reduction of (S)-2-acetolactate (S2AL) to yield (R)-2,3-dihydroxy-isovalerate. In the isomerase reaction, S2AL is rearranged via a Mg-dependent methyl migration to produce 3-hydroxy-3-methyl-2-ketobutyrate (HMKB). In the reductase reaction, this 2-ketoacid undergoes a metal-dependent reduction by NADPH to yield (R)-2,3-dihydroxy-isovalerate.</text>
</comment>
<comment type="catalytic activity">
    <reaction evidence="1">
        <text>(2R)-2,3-dihydroxy-3-methylbutanoate + NADP(+) = (2S)-2-acetolactate + NADPH + H(+)</text>
        <dbReference type="Rhea" id="RHEA:22068"/>
        <dbReference type="ChEBI" id="CHEBI:15378"/>
        <dbReference type="ChEBI" id="CHEBI:49072"/>
        <dbReference type="ChEBI" id="CHEBI:57783"/>
        <dbReference type="ChEBI" id="CHEBI:58349"/>
        <dbReference type="ChEBI" id="CHEBI:58476"/>
        <dbReference type="EC" id="1.1.1.86"/>
    </reaction>
</comment>
<comment type="catalytic activity">
    <reaction evidence="1">
        <text>(2R,3R)-2,3-dihydroxy-3-methylpentanoate + NADP(+) = (S)-2-ethyl-2-hydroxy-3-oxobutanoate + NADPH + H(+)</text>
        <dbReference type="Rhea" id="RHEA:13493"/>
        <dbReference type="ChEBI" id="CHEBI:15378"/>
        <dbReference type="ChEBI" id="CHEBI:49256"/>
        <dbReference type="ChEBI" id="CHEBI:49258"/>
        <dbReference type="ChEBI" id="CHEBI:57783"/>
        <dbReference type="ChEBI" id="CHEBI:58349"/>
        <dbReference type="EC" id="1.1.1.86"/>
    </reaction>
</comment>
<comment type="cofactor">
    <cofactor evidence="1">
        <name>Mg(2+)</name>
        <dbReference type="ChEBI" id="CHEBI:18420"/>
    </cofactor>
    <text evidence="1">Binds 2 magnesium ions per subunit.</text>
</comment>
<comment type="pathway">
    <text evidence="1">Amino-acid biosynthesis; L-isoleucine biosynthesis; L-isoleucine from 2-oxobutanoate: step 2/4.</text>
</comment>
<comment type="pathway">
    <text evidence="1">Amino-acid biosynthesis; L-valine biosynthesis; L-valine from pyruvate: step 2/4.</text>
</comment>
<comment type="similarity">
    <text evidence="1">Belongs to the ketol-acid reductoisomerase family.</text>
</comment>
<organism>
    <name type="scientific">Picosynechococcus sp. (strain ATCC 27264 / PCC 7002 / PR-6)</name>
    <name type="common">Agmenellum quadruplicatum</name>
    <dbReference type="NCBI Taxonomy" id="32049"/>
    <lineage>
        <taxon>Bacteria</taxon>
        <taxon>Bacillati</taxon>
        <taxon>Cyanobacteriota</taxon>
        <taxon>Cyanophyceae</taxon>
        <taxon>Oscillatoriophycideae</taxon>
        <taxon>Chroococcales</taxon>
        <taxon>Geminocystaceae</taxon>
        <taxon>Picosynechococcus</taxon>
    </lineage>
</organism>
<name>ILVC_PICP2</name>
<accession>B1XL20</accession>
<sequence length="331" mass="35716">MARMYYDADANLDLLNGKTVAIIGYGSQGHAHALNLKDSGINVVIGLYAGSKSTAKAEAEGLKVLPVAEAAKVADWIMILLPDDVQKSVYTKDILPNLQAGNVLSFAHGFNINFGQIVPPADVDVVMVAPKGPGHLVRRTYEQGQGVPALFAVYQDATGQARDLAMAYAKGIGGTRGGILETTFREETETDLFGEQAVLCGGLSALIKAGFETLVEAGYQPELAYFECLHEVKLIVDLVVEGGLAKMRDSISTTAEYGDYVSGPRVITAETKAAMKEILTEIQTGEFARNFILENQSGQAQFTAIRRREAEHPIEVVGKDLRAMFSWLKES</sequence>
<proteinExistence type="inferred from homology"/>
<gene>
    <name evidence="1" type="primary">ilvC</name>
    <name type="ordered locus">SYNPCC7002_A1278</name>
</gene>
<dbReference type="EC" id="1.1.1.86" evidence="1"/>
<dbReference type="EMBL" id="CP000951">
    <property type="protein sequence ID" value="ACA99275.1"/>
    <property type="molecule type" value="Genomic_DNA"/>
</dbReference>
<dbReference type="RefSeq" id="WP_012306898.1">
    <property type="nucleotide sequence ID" value="NZ_JAHHPU010000001.1"/>
</dbReference>
<dbReference type="SMR" id="B1XL20"/>
<dbReference type="STRING" id="32049.SYNPCC7002_A1278"/>
<dbReference type="KEGG" id="syp:SYNPCC7002_A1278"/>
<dbReference type="eggNOG" id="COG0059">
    <property type="taxonomic scope" value="Bacteria"/>
</dbReference>
<dbReference type="HOGENOM" id="CLU_033821_0_1_3"/>
<dbReference type="UniPathway" id="UPA00047">
    <property type="reaction ID" value="UER00056"/>
</dbReference>
<dbReference type="UniPathway" id="UPA00049">
    <property type="reaction ID" value="UER00060"/>
</dbReference>
<dbReference type="Proteomes" id="UP000001688">
    <property type="component" value="Chromosome"/>
</dbReference>
<dbReference type="GO" id="GO:0005829">
    <property type="term" value="C:cytosol"/>
    <property type="evidence" value="ECO:0007669"/>
    <property type="project" value="TreeGrafter"/>
</dbReference>
<dbReference type="GO" id="GO:0004455">
    <property type="term" value="F:ketol-acid reductoisomerase activity"/>
    <property type="evidence" value="ECO:0007669"/>
    <property type="project" value="UniProtKB-UniRule"/>
</dbReference>
<dbReference type="GO" id="GO:0000287">
    <property type="term" value="F:magnesium ion binding"/>
    <property type="evidence" value="ECO:0007669"/>
    <property type="project" value="UniProtKB-UniRule"/>
</dbReference>
<dbReference type="GO" id="GO:0050661">
    <property type="term" value="F:NADP binding"/>
    <property type="evidence" value="ECO:0007669"/>
    <property type="project" value="InterPro"/>
</dbReference>
<dbReference type="GO" id="GO:0009097">
    <property type="term" value="P:isoleucine biosynthetic process"/>
    <property type="evidence" value="ECO:0007669"/>
    <property type="project" value="UniProtKB-UniRule"/>
</dbReference>
<dbReference type="GO" id="GO:0009099">
    <property type="term" value="P:L-valine biosynthetic process"/>
    <property type="evidence" value="ECO:0007669"/>
    <property type="project" value="UniProtKB-UniRule"/>
</dbReference>
<dbReference type="FunFam" id="3.40.50.720:FF:000023">
    <property type="entry name" value="Ketol-acid reductoisomerase (NADP(+))"/>
    <property type="match status" value="1"/>
</dbReference>
<dbReference type="Gene3D" id="6.10.240.10">
    <property type="match status" value="1"/>
</dbReference>
<dbReference type="Gene3D" id="3.40.50.720">
    <property type="entry name" value="NAD(P)-binding Rossmann-like Domain"/>
    <property type="match status" value="1"/>
</dbReference>
<dbReference type="HAMAP" id="MF_00435">
    <property type="entry name" value="IlvC"/>
    <property type="match status" value="1"/>
</dbReference>
<dbReference type="InterPro" id="IPR008927">
    <property type="entry name" value="6-PGluconate_DH-like_C_sf"/>
</dbReference>
<dbReference type="InterPro" id="IPR013023">
    <property type="entry name" value="KARI"/>
</dbReference>
<dbReference type="InterPro" id="IPR000506">
    <property type="entry name" value="KARI_C"/>
</dbReference>
<dbReference type="InterPro" id="IPR013116">
    <property type="entry name" value="KARI_N"/>
</dbReference>
<dbReference type="InterPro" id="IPR014359">
    <property type="entry name" value="KARI_prok"/>
</dbReference>
<dbReference type="InterPro" id="IPR036291">
    <property type="entry name" value="NAD(P)-bd_dom_sf"/>
</dbReference>
<dbReference type="NCBIfam" id="TIGR00465">
    <property type="entry name" value="ilvC"/>
    <property type="match status" value="1"/>
</dbReference>
<dbReference type="NCBIfam" id="NF004017">
    <property type="entry name" value="PRK05479.1"/>
    <property type="match status" value="1"/>
</dbReference>
<dbReference type="NCBIfam" id="NF009940">
    <property type="entry name" value="PRK13403.1"/>
    <property type="match status" value="1"/>
</dbReference>
<dbReference type="PANTHER" id="PTHR21371">
    <property type="entry name" value="KETOL-ACID REDUCTOISOMERASE, MITOCHONDRIAL"/>
    <property type="match status" value="1"/>
</dbReference>
<dbReference type="PANTHER" id="PTHR21371:SF1">
    <property type="entry name" value="KETOL-ACID REDUCTOISOMERASE, MITOCHONDRIAL"/>
    <property type="match status" value="1"/>
</dbReference>
<dbReference type="Pfam" id="PF01450">
    <property type="entry name" value="KARI_C"/>
    <property type="match status" value="1"/>
</dbReference>
<dbReference type="Pfam" id="PF07991">
    <property type="entry name" value="KARI_N"/>
    <property type="match status" value="1"/>
</dbReference>
<dbReference type="PIRSF" id="PIRSF000116">
    <property type="entry name" value="IlvC_gammaproteo"/>
    <property type="match status" value="1"/>
</dbReference>
<dbReference type="SUPFAM" id="SSF48179">
    <property type="entry name" value="6-phosphogluconate dehydrogenase C-terminal domain-like"/>
    <property type="match status" value="1"/>
</dbReference>
<dbReference type="SUPFAM" id="SSF51735">
    <property type="entry name" value="NAD(P)-binding Rossmann-fold domains"/>
    <property type="match status" value="1"/>
</dbReference>
<dbReference type="PROSITE" id="PS51851">
    <property type="entry name" value="KARI_C"/>
    <property type="match status" value="1"/>
</dbReference>
<dbReference type="PROSITE" id="PS51850">
    <property type="entry name" value="KARI_N"/>
    <property type="match status" value="1"/>
</dbReference>
<feature type="chain" id="PRO_1000191006" description="Ketol-acid reductoisomerase (NADP(+))">
    <location>
        <begin position="1"/>
        <end position="331"/>
    </location>
</feature>
<feature type="domain" description="KARI N-terminal Rossmann" evidence="2">
    <location>
        <begin position="2"/>
        <end position="182"/>
    </location>
</feature>
<feature type="domain" description="KARI C-terminal knotted" evidence="3">
    <location>
        <begin position="183"/>
        <end position="328"/>
    </location>
</feature>
<feature type="active site" evidence="1">
    <location>
        <position position="108"/>
    </location>
</feature>
<feature type="binding site" evidence="1">
    <location>
        <begin position="25"/>
        <end position="28"/>
    </location>
    <ligand>
        <name>NADP(+)</name>
        <dbReference type="ChEBI" id="CHEBI:58349"/>
    </ligand>
</feature>
<feature type="binding site" evidence="1">
    <location>
        <position position="51"/>
    </location>
    <ligand>
        <name>NADP(+)</name>
        <dbReference type="ChEBI" id="CHEBI:58349"/>
    </ligand>
</feature>
<feature type="binding site" evidence="1">
    <location>
        <position position="53"/>
    </location>
    <ligand>
        <name>NADP(+)</name>
        <dbReference type="ChEBI" id="CHEBI:58349"/>
    </ligand>
</feature>
<feature type="binding site" evidence="1">
    <location>
        <begin position="83"/>
        <end position="86"/>
    </location>
    <ligand>
        <name>NADP(+)</name>
        <dbReference type="ChEBI" id="CHEBI:58349"/>
    </ligand>
</feature>
<feature type="binding site" evidence="1">
    <location>
        <position position="134"/>
    </location>
    <ligand>
        <name>NADP(+)</name>
        <dbReference type="ChEBI" id="CHEBI:58349"/>
    </ligand>
</feature>
<feature type="binding site" evidence="1">
    <location>
        <position position="191"/>
    </location>
    <ligand>
        <name>Mg(2+)</name>
        <dbReference type="ChEBI" id="CHEBI:18420"/>
        <label>1</label>
    </ligand>
</feature>
<feature type="binding site" evidence="1">
    <location>
        <position position="191"/>
    </location>
    <ligand>
        <name>Mg(2+)</name>
        <dbReference type="ChEBI" id="CHEBI:18420"/>
        <label>2</label>
    </ligand>
</feature>
<feature type="binding site" evidence="1">
    <location>
        <position position="195"/>
    </location>
    <ligand>
        <name>Mg(2+)</name>
        <dbReference type="ChEBI" id="CHEBI:18420"/>
        <label>1</label>
    </ligand>
</feature>
<feature type="binding site" evidence="1">
    <location>
        <position position="227"/>
    </location>
    <ligand>
        <name>Mg(2+)</name>
        <dbReference type="ChEBI" id="CHEBI:18420"/>
        <label>2</label>
    </ligand>
</feature>
<feature type="binding site" evidence="1">
    <location>
        <position position="231"/>
    </location>
    <ligand>
        <name>Mg(2+)</name>
        <dbReference type="ChEBI" id="CHEBI:18420"/>
        <label>2</label>
    </ligand>
</feature>
<feature type="binding site" evidence="1">
    <location>
        <position position="252"/>
    </location>
    <ligand>
        <name>substrate</name>
    </ligand>
</feature>
<protein>
    <recommendedName>
        <fullName evidence="1">Ketol-acid reductoisomerase (NADP(+))</fullName>
        <shortName evidence="1">KARI</shortName>
        <ecNumber evidence="1">1.1.1.86</ecNumber>
    </recommendedName>
    <alternativeName>
        <fullName evidence="1">Acetohydroxy-acid isomeroreductase</fullName>
        <shortName evidence="1">AHIR</shortName>
    </alternativeName>
    <alternativeName>
        <fullName evidence="1">Alpha-keto-beta-hydroxylacyl reductoisomerase</fullName>
    </alternativeName>
    <alternativeName>
        <fullName evidence="1">Ketol-acid reductoisomerase type 1</fullName>
    </alternativeName>
    <alternativeName>
        <fullName evidence="1">Ketol-acid reductoisomerase type I</fullName>
    </alternativeName>
</protein>